<name>GA45G_HUMAN</name>
<comment type="function">
    <text>Involved in the regulation of growth and apoptosis. Mediates activation of stress-responsive MTK1/MEKK4 MAPKKK.</text>
</comment>
<comment type="subunit">
    <text evidence="2 3">Undergoes concentration-dependent homodimerization, which is required for growth inhibititory activity and enhances interaction with PCNA. Interacts with GADD45GIP1. Interacts with PCNA.</text>
</comment>
<comment type="interaction">
    <interactant intactId="EBI-448202">
        <id>O95257</id>
    </interactant>
    <interactant intactId="EBI-351710">
        <id>P12814</id>
        <label>ACTN1</label>
    </interactant>
    <organismsDiffer>false</organismsDiffer>
    <experiments>3</experiments>
</comment>
<comment type="interaction">
    <interactant intactId="EBI-448202">
        <id>O95257</id>
    </interactant>
    <interactant intactId="EBI-1053644">
        <id>Q8TED9</id>
        <label>AFAP1L1</label>
    </interactant>
    <organismsDiffer>false</organismsDiffer>
    <experiments>8</experiments>
</comment>
<comment type="interaction">
    <interactant intactId="EBI-448202">
        <id>O95257</id>
    </interactant>
    <interactant intactId="EBI-711189">
        <id>Q9BPX5</id>
        <label>ARPC5L</label>
    </interactant>
    <organismsDiffer>false</organismsDiffer>
    <experiments>4</experiments>
</comment>
<comment type="interaction">
    <interactant intactId="EBI-448202">
        <id>O95257</id>
    </interactant>
    <interactant intactId="EBI-10181188">
        <id>Q8N7W2-2</id>
        <label>BEND7</label>
    </interactant>
    <organismsDiffer>false</organismsDiffer>
    <experiments>3</experiments>
</comment>
<comment type="interaction">
    <interactant intactId="EBI-448202">
        <id>O95257</id>
    </interactant>
    <interactant intactId="EBI-465872">
        <id>Q6QNY1</id>
        <label>BLOC1S2</label>
    </interactant>
    <organismsDiffer>false</organismsDiffer>
    <experiments>3</experiments>
</comment>
<comment type="interaction">
    <interactant intactId="EBI-448202">
        <id>O95257</id>
    </interactant>
    <interactant intactId="EBI-473176">
        <id>Q9P2H0</id>
        <label>CEP126</label>
    </interactant>
    <organismsDiffer>false</organismsDiffer>
    <experiments>2</experiments>
</comment>
<comment type="interaction">
    <interactant intactId="EBI-448202">
        <id>O95257</id>
    </interactant>
    <interactant intactId="EBI-10181988">
        <id>Q8IYX8-2</id>
        <label>CEP57L1</label>
    </interactant>
    <organismsDiffer>false</organismsDiffer>
    <experiments>3</experiments>
</comment>
<comment type="interaction">
    <interactant intactId="EBI-448202">
        <id>O95257</id>
    </interactant>
    <interactant intactId="EBI-12551219">
        <id>Q96MT7</id>
        <label>CFAP44</label>
    </interactant>
    <organismsDiffer>false</organismsDiffer>
    <experiments>3</experiments>
</comment>
<comment type="interaction">
    <interactant intactId="EBI-448202">
        <id>O95257</id>
    </interactant>
    <interactant intactId="EBI-12907584">
        <id>Q92600-3</id>
        <label>CNOT9</label>
    </interactant>
    <organismsDiffer>false</organismsDiffer>
    <experiments>3</experiments>
</comment>
<comment type="interaction">
    <interactant intactId="EBI-448202">
        <id>O95257</id>
    </interactant>
    <interactant intactId="EBI-715074">
        <id>Q13561</id>
        <label>DCTN2</label>
    </interactant>
    <organismsDiffer>false</organismsDiffer>
    <experiments>5</experiments>
</comment>
<comment type="interaction">
    <interactant intactId="EBI-448202">
        <id>O95257</id>
    </interactant>
    <interactant intactId="EBI-742054">
        <id>Q96D03</id>
        <label>DDIT4L</label>
    </interactant>
    <organismsDiffer>false</organismsDiffer>
    <experiments>3</experiments>
</comment>
<comment type="interaction">
    <interactant intactId="EBI-448202">
        <id>O95257</id>
    </interactant>
    <interactant intactId="EBI-744099">
        <id>Q9H0I2</id>
        <label>ENKD1</label>
    </interactant>
    <organismsDiffer>false</organismsDiffer>
    <experiments>5</experiments>
</comment>
<comment type="interaction">
    <interactant intactId="EBI-448202">
        <id>O95257</id>
    </interactant>
    <interactant intactId="EBI-749727">
        <id>Q8NDB6</id>
        <label>FAM156A</label>
    </interactant>
    <organismsDiffer>false</organismsDiffer>
    <experiments>3</experiments>
</comment>
<comment type="interaction">
    <interactant intactId="EBI-448202">
        <id>O95257</id>
    </interactant>
    <interactant intactId="EBI-372506">
        <id>Q8TAE8</id>
        <label>GADD45GIP1</label>
    </interactant>
    <organismsDiffer>false</organismsDiffer>
    <experiments>4</experiments>
</comment>
<comment type="interaction">
    <interactant intactId="EBI-448202">
        <id>O95257</id>
    </interactant>
    <interactant intactId="EBI-10962409">
        <id>Q6IC98</id>
        <label>GRAMD4</label>
    </interactant>
    <organismsDiffer>false</organismsDiffer>
    <experiments>3</experiments>
</comment>
<comment type="interaction">
    <interactant intactId="EBI-448202">
        <id>O95257</id>
    </interactant>
    <interactant intactId="EBI-399080">
        <id>Q92993</id>
        <label>KAT5</label>
    </interactant>
    <organismsDiffer>false</organismsDiffer>
    <experiments>2</experiments>
</comment>
<comment type="interaction">
    <interactant intactId="EBI-448202">
        <id>O95257</id>
    </interactant>
    <interactant intactId="EBI-473196">
        <id>Q5T3J3</id>
        <label>LRIF1</label>
    </interactant>
    <organismsDiffer>false</organismsDiffer>
    <experiments>4</experiments>
</comment>
<comment type="interaction">
    <interactant intactId="EBI-448202">
        <id>O95257</id>
    </interactant>
    <interactant intactId="EBI-448104">
        <id>Q9Y6R4</id>
        <label>MAP3K4</label>
    </interactant>
    <organismsDiffer>false</organismsDiffer>
    <experiments>3</experiments>
</comment>
<comment type="interaction">
    <interactant intactId="EBI-448202">
        <id>O95257</id>
    </interactant>
    <interactant intactId="EBI-394707">
        <id>Q9Y3C7</id>
        <label>MED31</label>
    </interactant>
    <organismsDiffer>false</organismsDiffer>
    <experiments>2</experiments>
</comment>
<comment type="interaction">
    <interactant intactId="EBI-448202">
        <id>O95257</id>
    </interactant>
    <interactant intactId="EBI-12302085">
        <id>P08949-2</id>
        <label>NMB</label>
    </interactant>
    <organismsDiffer>false</organismsDiffer>
    <experiments>3</experiments>
</comment>
<comment type="interaction">
    <interactant intactId="EBI-448202">
        <id>O95257</id>
    </interactant>
    <interactant intactId="EBI-6912267">
        <id>A6NK89</id>
        <label>RASSF10</label>
    </interactant>
    <organismsDiffer>false</organismsDiffer>
    <experiments>3</experiments>
</comment>
<comment type="interaction">
    <interactant intactId="EBI-448202">
        <id>O95257</id>
    </interactant>
    <interactant intactId="EBI-948278">
        <id>Q15293</id>
        <label>RCN1</label>
    </interactant>
    <organismsDiffer>false</organismsDiffer>
    <experiments>3</experiments>
</comment>
<comment type="interaction">
    <interactant intactId="EBI-448202">
        <id>O95257</id>
    </interactant>
    <interactant intactId="EBI-307352">
        <id>Q04864</id>
        <label>REL</label>
    </interactant>
    <organismsDiffer>false</organismsDiffer>
    <experiments>4</experiments>
</comment>
<comment type="interaction">
    <interactant intactId="EBI-448202">
        <id>O95257</id>
    </interactant>
    <interactant intactId="EBI-7223720">
        <id>Q9Y3A4</id>
        <label>RRP7A</label>
    </interactant>
    <organismsDiffer>false</organismsDiffer>
    <experiments>3</experiments>
</comment>
<comment type="interaction">
    <interactant intactId="EBI-448202">
        <id>O95257</id>
    </interactant>
    <interactant intactId="EBI-724442">
        <id>P57060</id>
        <label>RWDD2B</label>
    </interactant>
    <organismsDiffer>false</organismsDiffer>
    <experiments>15</experiments>
</comment>
<comment type="interaction">
    <interactant intactId="EBI-448202">
        <id>O95257</id>
    </interactant>
    <interactant intactId="EBI-21353855">
        <id>Q99598</id>
        <label>TSNAX</label>
    </interactant>
    <organismsDiffer>false</organismsDiffer>
    <experiments>4</experiments>
</comment>
<comment type="interaction">
    <interactant intactId="EBI-448202">
        <id>O95257</id>
    </interactant>
    <interactant intactId="EBI-473284">
        <id>Q9BVJ6</id>
        <label>UTP14A</label>
    </interactant>
    <organismsDiffer>false</organismsDiffer>
    <experiments>3</experiments>
</comment>
<comment type="interaction">
    <interactant intactId="EBI-448202">
        <id>O95257</id>
    </interactant>
    <interactant intactId="EBI-2799450">
        <id>Q8N3J9</id>
        <label>ZNF664</label>
    </interactant>
    <organismsDiffer>false</organismsDiffer>
    <experiments>3</experiments>
</comment>
<comment type="interaction">
    <interactant intactId="EBI-448202">
        <id>O95257</id>
    </interactant>
    <interactant intactId="EBI-10226414">
        <id>Q0D2J5</id>
        <label>ZNF763</label>
    </interactant>
    <organismsDiffer>false</organismsDiffer>
    <experiments>3</experiments>
</comment>
<comment type="domain">
    <text>Two central helices mediate homodimerization through parallel packing.</text>
</comment>
<comment type="similarity">
    <text evidence="5">Belongs to the GADD45 family.</text>
</comment>
<comment type="online information" name="Wikipedia">
    <link uri="https://en.wikipedia.org/wiki/GADD45G"/>
    <text>GADD45G entry</text>
</comment>
<keyword id="KW-0002">3D-structure</keyword>
<keyword id="KW-0053">Apoptosis</keyword>
<keyword id="KW-0217">Developmental protein</keyword>
<keyword id="KW-0221">Differentiation</keyword>
<keyword id="KW-1185">Reference proteome</keyword>
<proteinExistence type="evidence at protein level"/>
<reference key="1">
    <citation type="journal article" date="1998" name="Cell">
        <title>A family of stress-inducible GADD45-like proteins mediate activation of the stress-responsive MTK1/MEKK4 MAPKKK.</title>
        <authorList>
            <person name="Takekawa M."/>
            <person name="Saito H."/>
        </authorList>
    </citation>
    <scope>NUCLEOTIDE SEQUENCE [MRNA]</scope>
</reference>
<reference key="2">
    <citation type="journal article" date="1999" name="Oncogene">
        <title>Cytokine response gene 6 induces p21 and regulates both cell growth and arrest.</title>
        <authorList>
            <person name="Fan W."/>
            <person name="Richter G."/>
            <person name="Cereseto A."/>
            <person name="Beadling C."/>
            <person name="Smith K.A."/>
        </authorList>
    </citation>
    <scope>NUCLEOTIDE SEQUENCE [MRNA]</scope>
</reference>
<reference key="3">
    <citation type="submission" date="2000-05" db="EMBL/GenBank/DDBJ databases">
        <title>Cloning and characterization of Gadd45 gamma gene and its regulation by C/EBP.</title>
        <authorList>
            <person name="Jung N."/>
            <person name="Yi Y."/>
            <person name="Kim D."/>
            <person name="Shong M."/>
            <person name="Hong S."/>
            <person name="Lee H."/>
            <person name="Bae I."/>
        </authorList>
    </citation>
    <scope>NUCLEOTIDE SEQUENCE [GENOMIC DNA]</scope>
</reference>
<reference key="4">
    <citation type="journal article" date="2000" name="Cytogenet. Cell Genet.">
        <title>Assignment of human GADD45G to chromosome 9q22.1--&gt;q22.3 by radiation hybrid mapping.</title>
        <authorList>
            <person name="Gong R."/>
            <person name="Yu L."/>
            <person name="Zhang H."/>
            <person name="Tu Q."/>
            <person name="Zhao Y."/>
            <person name="Yang J."/>
            <person name="Xu Y."/>
            <person name="Zhao S."/>
        </authorList>
    </citation>
    <scope>NUCLEOTIDE SEQUENCE [MRNA]</scope>
    <scope>VARIANT SER-112</scope>
</reference>
<reference key="5">
    <citation type="journal article" date="2004" name="Nat. Genet.">
        <title>Complete sequencing and characterization of 21,243 full-length human cDNAs.</title>
        <authorList>
            <person name="Ota T."/>
            <person name="Suzuki Y."/>
            <person name="Nishikawa T."/>
            <person name="Otsuki T."/>
            <person name="Sugiyama T."/>
            <person name="Irie R."/>
            <person name="Wakamatsu A."/>
            <person name="Hayashi K."/>
            <person name="Sato H."/>
            <person name="Nagai K."/>
            <person name="Kimura K."/>
            <person name="Makita H."/>
            <person name="Sekine M."/>
            <person name="Obayashi M."/>
            <person name="Nishi T."/>
            <person name="Shibahara T."/>
            <person name="Tanaka T."/>
            <person name="Ishii S."/>
            <person name="Yamamoto J."/>
            <person name="Saito K."/>
            <person name="Kawai Y."/>
            <person name="Isono Y."/>
            <person name="Nakamura Y."/>
            <person name="Nagahari K."/>
            <person name="Murakami K."/>
            <person name="Yasuda T."/>
            <person name="Iwayanagi T."/>
            <person name="Wagatsuma M."/>
            <person name="Shiratori A."/>
            <person name="Sudo H."/>
            <person name="Hosoiri T."/>
            <person name="Kaku Y."/>
            <person name="Kodaira H."/>
            <person name="Kondo H."/>
            <person name="Sugawara M."/>
            <person name="Takahashi M."/>
            <person name="Kanda K."/>
            <person name="Yokoi T."/>
            <person name="Furuya T."/>
            <person name="Kikkawa E."/>
            <person name="Omura Y."/>
            <person name="Abe K."/>
            <person name="Kamihara K."/>
            <person name="Katsuta N."/>
            <person name="Sato K."/>
            <person name="Tanikawa M."/>
            <person name="Yamazaki M."/>
            <person name="Ninomiya K."/>
            <person name="Ishibashi T."/>
            <person name="Yamashita H."/>
            <person name="Murakawa K."/>
            <person name="Fujimori K."/>
            <person name="Tanai H."/>
            <person name="Kimata M."/>
            <person name="Watanabe M."/>
            <person name="Hiraoka S."/>
            <person name="Chiba Y."/>
            <person name="Ishida S."/>
            <person name="Ono Y."/>
            <person name="Takiguchi S."/>
            <person name="Watanabe S."/>
            <person name="Yosida M."/>
            <person name="Hotuta T."/>
            <person name="Kusano J."/>
            <person name="Kanehori K."/>
            <person name="Takahashi-Fujii A."/>
            <person name="Hara H."/>
            <person name="Tanase T.-O."/>
            <person name="Nomura Y."/>
            <person name="Togiya S."/>
            <person name="Komai F."/>
            <person name="Hara R."/>
            <person name="Takeuchi K."/>
            <person name="Arita M."/>
            <person name="Imose N."/>
            <person name="Musashino K."/>
            <person name="Yuuki H."/>
            <person name="Oshima A."/>
            <person name="Sasaki N."/>
            <person name="Aotsuka S."/>
            <person name="Yoshikawa Y."/>
            <person name="Matsunawa H."/>
            <person name="Ichihara T."/>
            <person name="Shiohata N."/>
            <person name="Sano S."/>
            <person name="Moriya S."/>
            <person name="Momiyama H."/>
            <person name="Satoh N."/>
            <person name="Takami S."/>
            <person name="Terashima Y."/>
            <person name="Suzuki O."/>
            <person name="Nakagawa S."/>
            <person name="Senoh A."/>
            <person name="Mizoguchi H."/>
            <person name="Goto Y."/>
            <person name="Shimizu F."/>
            <person name="Wakebe H."/>
            <person name="Hishigaki H."/>
            <person name="Watanabe T."/>
            <person name="Sugiyama A."/>
            <person name="Takemoto M."/>
            <person name="Kawakami B."/>
            <person name="Yamazaki M."/>
            <person name="Watanabe K."/>
            <person name="Kumagai A."/>
            <person name="Itakura S."/>
            <person name="Fukuzumi Y."/>
            <person name="Fujimori Y."/>
            <person name="Komiyama M."/>
            <person name="Tashiro H."/>
            <person name="Tanigami A."/>
            <person name="Fujiwara T."/>
            <person name="Ono T."/>
            <person name="Yamada K."/>
            <person name="Fujii Y."/>
            <person name="Ozaki K."/>
            <person name="Hirao M."/>
            <person name="Ohmori Y."/>
            <person name="Kawabata A."/>
            <person name="Hikiji T."/>
            <person name="Kobatake N."/>
            <person name="Inagaki H."/>
            <person name="Ikema Y."/>
            <person name="Okamoto S."/>
            <person name="Okitani R."/>
            <person name="Kawakami T."/>
            <person name="Noguchi S."/>
            <person name="Itoh T."/>
            <person name="Shigeta K."/>
            <person name="Senba T."/>
            <person name="Matsumura K."/>
            <person name="Nakajima Y."/>
            <person name="Mizuno T."/>
            <person name="Morinaga M."/>
            <person name="Sasaki M."/>
            <person name="Togashi T."/>
            <person name="Oyama M."/>
            <person name="Hata H."/>
            <person name="Watanabe M."/>
            <person name="Komatsu T."/>
            <person name="Mizushima-Sugano J."/>
            <person name="Satoh T."/>
            <person name="Shirai Y."/>
            <person name="Takahashi Y."/>
            <person name="Nakagawa K."/>
            <person name="Okumura K."/>
            <person name="Nagase T."/>
            <person name="Nomura N."/>
            <person name="Kikuchi H."/>
            <person name="Masuho Y."/>
            <person name="Yamashita R."/>
            <person name="Nakai K."/>
            <person name="Yada T."/>
            <person name="Nakamura Y."/>
            <person name="Ohara O."/>
            <person name="Isogai T."/>
            <person name="Sugano S."/>
        </authorList>
    </citation>
    <scope>NUCLEOTIDE SEQUENCE [LARGE SCALE MRNA]</scope>
    <source>
        <tissue>Brain</tissue>
    </source>
</reference>
<reference key="6">
    <citation type="submission" date="2004-10" db="EMBL/GenBank/DDBJ databases">
        <title>Cloning of human full-length CDSs in BD Creator(TM) system donor vector.</title>
        <authorList>
            <person name="Kalnine N."/>
            <person name="Chen X."/>
            <person name="Rolfs A."/>
            <person name="Halleck A."/>
            <person name="Hines L."/>
            <person name="Eisenstein S."/>
            <person name="Koundinya M."/>
            <person name="Raphael J."/>
            <person name="Moreira D."/>
            <person name="Kelley T."/>
            <person name="LaBaer J."/>
            <person name="Lin Y."/>
            <person name="Phelan M."/>
            <person name="Farmer A."/>
        </authorList>
    </citation>
    <scope>NUCLEOTIDE SEQUENCE [LARGE SCALE MRNA]</scope>
</reference>
<reference key="7">
    <citation type="submission" date="2002-03" db="EMBL/GenBank/DDBJ databases">
        <authorList>
            <consortium name="NIEHS SNPs program"/>
        </authorList>
    </citation>
    <scope>NUCLEOTIDE SEQUENCE [GENOMIC DNA]</scope>
    <scope>VARIANT SER-112</scope>
</reference>
<reference key="8">
    <citation type="submission" date="2005-07" db="EMBL/GenBank/DDBJ databases">
        <authorList>
            <person name="Mural R.J."/>
            <person name="Istrail S."/>
            <person name="Sutton G."/>
            <person name="Florea L."/>
            <person name="Halpern A.L."/>
            <person name="Mobarry C.M."/>
            <person name="Lippert R."/>
            <person name="Walenz B."/>
            <person name="Shatkay H."/>
            <person name="Dew I."/>
            <person name="Miller J.R."/>
            <person name="Flanigan M.J."/>
            <person name="Edwards N.J."/>
            <person name="Bolanos R."/>
            <person name="Fasulo D."/>
            <person name="Halldorsson B.V."/>
            <person name="Hannenhalli S."/>
            <person name="Turner R."/>
            <person name="Yooseph S."/>
            <person name="Lu F."/>
            <person name="Nusskern D.R."/>
            <person name="Shue B.C."/>
            <person name="Zheng X.H."/>
            <person name="Zhong F."/>
            <person name="Delcher A.L."/>
            <person name="Huson D.H."/>
            <person name="Kravitz S.A."/>
            <person name="Mouchard L."/>
            <person name="Reinert K."/>
            <person name="Remington K.A."/>
            <person name="Clark A.G."/>
            <person name="Waterman M.S."/>
            <person name="Eichler E.E."/>
            <person name="Adams M.D."/>
            <person name="Hunkapiller M.W."/>
            <person name="Myers E.W."/>
            <person name="Venter J.C."/>
        </authorList>
    </citation>
    <scope>NUCLEOTIDE SEQUENCE [LARGE SCALE GENOMIC DNA]</scope>
</reference>
<reference key="9">
    <citation type="journal article" date="2004" name="Genome Res.">
        <title>The status, quality, and expansion of the NIH full-length cDNA project: the Mammalian Gene Collection (MGC).</title>
        <authorList>
            <consortium name="The MGC Project Team"/>
        </authorList>
    </citation>
    <scope>NUCLEOTIDE SEQUENCE [LARGE SCALE MRNA]</scope>
    <source>
        <tissue>Lung</tissue>
    </source>
</reference>
<reference key="10">
    <citation type="journal article" date="2003" name="J. Biol. Chem.">
        <title>CR6-interacting factor 1 interacts with Gadd45 family proteins and modulates the cell cycle.</title>
        <authorList>
            <person name="Chung H.K."/>
            <person name="Yi Y.-W."/>
            <person name="Jung N.-C."/>
            <person name="Kim D."/>
            <person name="Suh J.M."/>
            <person name="Kim H."/>
            <person name="Park K.C."/>
            <person name="Song J.H."/>
            <person name="Kim D.W."/>
            <person name="Hwang E.S."/>
            <person name="Yoon S.-H."/>
            <person name="Bae Y.-S."/>
            <person name="Kim J.M."/>
            <person name="Bae I."/>
            <person name="Shong M."/>
        </authorList>
    </citation>
    <scope>INTERACTION WITH GADD45GIP1</scope>
    <source>
        <tissue>Colon carcinoma</tissue>
    </source>
</reference>
<reference key="11">
    <citation type="journal article" date="2011" name="Protein Cell">
        <title>Crystal structure of human Gadd45gamma reveals an active dimer.</title>
        <authorList>
            <person name="Zhang W."/>
            <person name="Fu S."/>
            <person name="Liu X."/>
            <person name="Zhao X."/>
            <person name="Zhang W."/>
            <person name="Peng W."/>
            <person name="Wu C."/>
            <person name="Li Y."/>
            <person name="Li X."/>
            <person name="Bartlam M."/>
            <person name="Zeng Z.H."/>
            <person name="Zhan Q."/>
            <person name="Rao Z."/>
        </authorList>
    </citation>
    <scope>X-RAY CRYSTALLOGRAPHY (2.3 ANGSTROMS)</scope>
    <scope>SUBUNIT</scope>
    <scope>MUTAGENESIS OF ALA-47; ILE-76; LEU-80; ALA-83; GLU-87 AND ASP-89</scope>
    <scope>INTERACTION WITH PCNA</scope>
</reference>
<sequence length="159" mass="17121">MTLEEVRGQDTVPESTARMQGAGKALHELLLSAQRQGCLTAGVYESAKVLNVDPDNVTFCVLAAGEEDEGDIALQIHFTLIQAFCCENDIDIVRVGDVQRLAAIVGAGEEAGAPGDLHCILISNPNEDAWKDPALEKLSLFCEESRSVNDWVPSITLPE</sequence>
<feature type="chain" id="PRO_0000148336" description="Growth arrest and DNA damage-inducible protein GADD45 gamma">
    <location>
        <begin position="1"/>
        <end position="159"/>
    </location>
</feature>
<feature type="region of interest" description="Homodimerization">
    <location>
        <begin position="43"/>
        <end position="86"/>
    </location>
</feature>
<feature type="sequence variant" id="VAR_018888" description="In dbSNP:rs3138505." evidence="1 4">
    <original>G</original>
    <variation>S</variation>
    <location>
        <position position="112"/>
    </location>
</feature>
<feature type="mutagenesis site" description="30-fold reduction in homodimerization affinity and 90% decrease in growth inhibition activity and ability to stop cell cycle; when associated with E-77, E-80 and R-83." evidence="3">
    <original>A</original>
    <variation>R</variation>
    <location>
        <position position="47"/>
    </location>
</feature>
<feature type="mutagenesis site" description="30-fold reduction in homodimerization affinity and 90% decrease in growth inhibition activity and ability to stop cell cycle; when associated with R-47, E-80 and R-83." evidence="3">
    <original>I</original>
    <variation>E</variation>
    <location>
        <position position="76"/>
    </location>
</feature>
<feature type="mutagenesis site" description="30-fold reduction in homodimerization affinity and 90% decrease in growth inhibition activity and ability to stop cell cycle; when associated with R-47, E-77 and R-83." evidence="3">
    <original>L</original>
    <variation>E</variation>
    <location>
        <position position="80"/>
    </location>
</feature>
<feature type="mutagenesis site" description="30-fold reduction in homodimerization affinity and 90% decrease in growth inhibition activity and ability to stop cell cycle; when associated with R-47, E-77 and E-80." evidence="3">
    <original>A</original>
    <variation>R</variation>
    <location>
        <position position="83"/>
    </location>
</feature>
<feature type="mutagenesis site" description="Reduced growth inhibition activity; when associated with K-89." evidence="3">
    <original>E</original>
    <variation>K</variation>
    <location>
        <position position="87"/>
    </location>
</feature>
<feature type="mutagenesis site" description="Reduced growth inhibition activity; when associated with K-87." evidence="3">
    <original>D</original>
    <variation>K</variation>
    <location>
        <position position="89"/>
    </location>
</feature>
<feature type="sequence conflict" description="In Ref. 4; AAK00414." evidence="5" ref="4">
    <original>QR</original>
    <variation>HG</variation>
    <location>
        <begin position="34"/>
        <end position="35"/>
    </location>
</feature>
<feature type="sequence conflict" description="In Ref. 4; AAK00414." evidence="5" ref="4">
    <original>APG</original>
    <variation>CAC</variation>
    <location>
        <begin position="113"/>
        <end position="115"/>
    </location>
</feature>
<feature type="helix" evidence="6">
    <location>
        <begin position="17"/>
        <end position="35"/>
    </location>
</feature>
<feature type="strand" evidence="6">
    <location>
        <begin position="39"/>
        <end position="42"/>
    </location>
</feature>
<feature type="helix" evidence="6">
    <location>
        <begin position="43"/>
        <end position="52"/>
    </location>
</feature>
<feature type="helix" evidence="6">
    <location>
        <begin position="54"/>
        <end position="56"/>
    </location>
</feature>
<feature type="strand" evidence="6">
    <location>
        <begin position="57"/>
        <end position="63"/>
    </location>
</feature>
<feature type="helix" evidence="6">
    <location>
        <begin position="66"/>
        <end position="68"/>
    </location>
</feature>
<feature type="helix" evidence="6">
    <location>
        <begin position="72"/>
        <end position="87"/>
    </location>
</feature>
<feature type="strand" evidence="6">
    <location>
        <begin position="91"/>
        <end position="96"/>
    </location>
</feature>
<feature type="helix" evidence="6">
    <location>
        <begin position="98"/>
        <end position="105"/>
    </location>
</feature>
<feature type="strand" evidence="6">
    <location>
        <begin position="111"/>
        <end position="113"/>
    </location>
</feature>
<feature type="strand" evidence="6">
    <location>
        <begin position="118"/>
        <end position="123"/>
    </location>
</feature>
<feature type="strand" evidence="6">
    <location>
        <begin position="125"/>
        <end position="128"/>
    </location>
</feature>
<feature type="helix" evidence="6">
    <location>
        <begin position="133"/>
        <end position="147"/>
    </location>
</feature>
<dbReference type="EMBL" id="AF078078">
    <property type="protein sequence ID" value="AAC83329.1"/>
    <property type="molecule type" value="mRNA"/>
</dbReference>
<dbReference type="EMBL" id="AF079806">
    <property type="protein sequence ID" value="AAD28544.1"/>
    <property type="molecule type" value="mRNA"/>
</dbReference>
<dbReference type="EMBL" id="AF265659">
    <property type="protein sequence ID" value="AAF73468.1"/>
    <property type="molecule type" value="Genomic_DNA"/>
</dbReference>
<dbReference type="EMBL" id="AF087883">
    <property type="protein sequence ID" value="AAK00414.1"/>
    <property type="molecule type" value="mRNA"/>
</dbReference>
<dbReference type="EMBL" id="AK313689">
    <property type="protein sequence ID" value="BAG36438.1"/>
    <property type="molecule type" value="mRNA"/>
</dbReference>
<dbReference type="EMBL" id="BT007234">
    <property type="protein sequence ID" value="AAP35898.1"/>
    <property type="molecule type" value="mRNA"/>
</dbReference>
<dbReference type="EMBL" id="AF494037">
    <property type="protein sequence ID" value="AAM00007.1"/>
    <property type="molecule type" value="Genomic_DNA"/>
</dbReference>
<dbReference type="EMBL" id="CH471089">
    <property type="protein sequence ID" value="EAW62774.1"/>
    <property type="molecule type" value="Genomic_DNA"/>
</dbReference>
<dbReference type="EMBL" id="BC000465">
    <property type="protein sequence ID" value="AAH00465.1"/>
    <property type="molecule type" value="mRNA"/>
</dbReference>
<dbReference type="EMBL" id="BC019325">
    <property type="protein sequence ID" value="AAH19325.1"/>
    <property type="molecule type" value="mRNA"/>
</dbReference>
<dbReference type="CCDS" id="CCDS6686.1"/>
<dbReference type="RefSeq" id="NP_006696.1">
    <property type="nucleotide sequence ID" value="NM_006705.4"/>
</dbReference>
<dbReference type="PDB" id="2WAL">
    <property type="method" value="X-ray"/>
    <property type="resolution" value="2.40 A"/>
    <property type="chains" value="A/B=1-159"/>
</dbReference>
<dbReference type="PDB" id="3FFM">
    <property type="method" value="X-ray"/>
    <property type="resolution" value="2.30 A"/>
    <property type="chains" value="A=1-159"/>
</dbReference>
<dbReference type="PDBsum" id="2WAL"/>
<dbReference type="PDBsum" id="3FFM"/>
<dbReference type="SMR" id="O95257"/>
<dbReference type="BioGRID" id="116117">
    <property type="interactions" value="78"/>
</dbReference>
<dbReference type="CORUM" id="O95257"/>
<dbReference type="DIP" id="DIP-24218N"/>
<dbReference type="FunCoup" id="O95257">
    <property type="interactions" value="2507"/>
</dbReference>
<dbReference type="IntAct" id="O95257">
    <property type="interactions" value="61"/>
</dbReference>
<dbReference type="MINT" id="O95257"/>
<dbReference type="STRING" id="9606.ENSP00000252506"/>
<dbReference type="BioMuta" id="GADD45G"/>
<dbReference type="PaxDb" id="9606-ENSP00000252506"/>
<dbReference type="PeptideAtlas" id="O95257"/>
<dbReference type="ProteomicsDB" id="50751"/>
<dbReference type="Antibodypedia" id="13541">
    <property type="antibodies" value="896 antibodies from 35 providers"/>
</dbReference>
<dbReference type="DNASU" id="10912"/>
<dbReference type="Ensembl" id="ENST00000252506.11">
    <property type="protein sequence ID" value="ENSP00000252506.6"/>
    <property type="gene ID" value="ENSG00000130222.11"/>
</dbReference>
<dbReference type="GeneID" id="10912"/>
<dbReference type="KEGG" id="hsa:10912"/>
<dbReference type="MANE-Select" id="ENST00000252506.11">
    <property type="protein sequence ID" value="ENSP00000252506.6"/>
    <property type="RefSeq nucleotide sequence ID" value="NM_006705.4"/>
    <property type="RefSeq protein sequence ID" value="NP_006696.1"/>
</dbReference>
<dbReference type="UCSC" id="uc004aqq.4">
    <property type="organism name" value="human"/>
</dbReference>
<dbReference type="AGR" id="HGNC:4097"/>
<dbReference type="CTD" id="10912"/>
<dbReference type="DisGeNET" id="10912"/>
<dbReference type="GeneCards" id="GADD45G"/>
<dbReference type="HGNC" id="HGNC:4097">
    <property type="gene designation" value="GADD45G"/>
</dbReference>
<dbReference type="HPA" id="ENSG00000130222">
    <property type="expression patterns" value="Tissue enhanced (heart muscle, liver)"/>
</dbReference>
<dbReference type="MIM" id="604949">
    <property type="type" value="gene"/>
</dbReference>
<dbReference type="neXtProt" id="NX_O95257"/>
<dbReference type="OpenTargets" id="ENSG00000130222"/>
<dbReference type="PharmGKB" id="PA28512"/>
<dbReference type="VEuPathDB" id="HostDB:ENSG00000130222"/>
<dbReference type="eggNOG" id="ENOG502RXKU">
    <property type="taxonomic scope" value="Eukaryota"/>
</dbReference>
<dbReference type="GeneTree" id="ENSGT00950000182964"/>
<dbReference type="HOGENOM" id="CLU_118164_0_0_1"/>
<dbReference type="InParanoid" id="O95257"/>
<dbReference type="OMA" id="SRSAYDW"/>
<dbReference type="OrthoDB" id="5976967at2759"/>
<dbReference type="PAN-GO" id="O95257">
    <property type="GO annotations" value="3 GO annotations based on evolutionary models"/>
</dbReference>
<dbReference type="PhylomeDB" id="O95257"/>
<dbReference type="TreeFam" id="TF300196"/>
<dbReference type="PathwayCommons" id="O95257"/>
<dbReference type="SignaLink" id="O95257"/>
<dbReference type="SIGNOR" id="O95257"/>
<dbReference type="BioGRID-ORCS" id="10912">
    <property type="hits" value="18 hits in 1153 CRISPR screens"/>
</dbReference>
<dbReference type="ChiTaRS" id="GADD45G">
    <property type="organism name" value="human"/>
</dbReference>
<dbReference type="EvolutionaryTrace" id="O95257"/>
<dbReference type="GeneWiki" id="GADD45G"/>
<dbReference type="GenomeRNAi" id="10912"/>
<dbReference type="Pharos" id="O95257">
    <property type="development level" value="Tbio"/>
</dbReference>
<dbReference type="PRO" id="PR:O95257"/>
<dbReference type="Proteomes" id="UP000005640">
    <property type="component" value="Chromosome 9"/>
</dbReference>
<dbReference type="RNAct" id="O95257">
    <property type="molecule type" value="protein"/>
</dbReference>
<dbReference type="Bgee" id="ENSG00000130222">
    <property type="expression patterns" value="Expressed in mucosa of stomach and 122 other cell types or tissues"/>
</dbReference>
<dbReference type="ExpressionAtlas" id="O95257">
    <property type="expression patterns" value="baseline and differential"/>
</dbReference>
<dbReference type="GO" id="GO:0005737">
    <property type="term" value="C:cytoplasm"/>
    <property type="evidence" value="ECO:0000314"/>
    <property type="project" value="UniProtKB"/>
</dbReference>
<dbReference type="GO" id="GO:0005634">
    <property type="term" value="C:nucleus"/>
    <property type="evidence" value="ECO:0000314"/>
    <property type="project" value="UniProtKB"/>
</dbReference>
<dbReference type="GO" id="GO:0006915">
    <property type="term" value="P:apoptotic process"/>
    <property type="evidence" value="ECO:0007669"/>
    <property type="project" value="UniProtKB-KW"/>
</dbReference>
<dbReference type="GO" id="GO:0030154">
    <property type="term" value="P:cell differentiation"/>
    <property type="evidence" value="ECO:0007669"/>
    <property type="project" value="UniProtKB-KW"/>
</dbReference>
<dbReference type="GO" id="GO:0043065">
    <property type="term" value="P:positive regulation of apoptotic process"/>
    <property type="evidence" value="ECO:0000314"/>
    <property type="project" value="UniProtKB"/>
</dbReference>
<dbReference type="GO" id="GO:0120162">
    <property type="term" value="P:positive regulation of cold-induced thermogenesis"/>
    <property type="evidence" value="ECO:0000250"/>
    <property type="project" value="YuBioLab"/>
</dbReference>
<dbReference type="GO" id="GO:0046330">
    <property type="term" value="P:positive regulation of JNK cascade"/>
    <property type="evidence" value="ECO:0000314"/>
    <property type="project" value="UniProtKB"/>
</dbReference>
<dbReference type="GO" id="GO:1900745">
    <property type="term" value="P:positive regulation of p38MAPK cascade"/>
    <property type="evidence" value="ECO:0000314"/>
    <property type="project" value="UniProtKB"/>
</dbReference>
<dbReference type="GO" id="GO:0051726">
    <property type="term" value="P:regulation of cell cycle"/>
    <property type="evidence" value="ECO:0000318"/>
    <property type="project" value="GO_Central"/>
</dbReference>
<dbReference type="FunFam" id="3.30.1330.30:FF:000018">
    <property type="entry name" value="growth arrest and DNA damage-inducible protein GADD45 gamma"/>
    <property type="match status" value="1"/>
</dbReference>
<dbReference type="Gene3D" id="3.30.1330.30">
    <property type="match status" value="1"/>
</dbReference>
<dbReference type="InterPro" id="IPR024824">
    <property type="entry name" value="GADD45"/>
</dbReference>
<dbReference type="InterPro" id="IPR029064">
    <property type="entry name" value="Ribosomal_eL30-like_sf"/>
</dbReference>
<dbReference type="InterPro" id="IPR004038">
    <property type="entry name" value="Ribosomal_eL8/eL30/eS12/Gad45"/>
</dbReference>
<dbReference type="PANTHER" id="PTHR10411">
    <property type="entry name" value="GROWTH ARREST AND DNA DAMAGE-INDUCIBLE PROTEIN GADD45"/>
    <property type="match status" value="1"/>
</dbReference>
<dbReference type="PANTHER" id="PTHR10411:SF4">
    <property type="entry name" value="GROWTH ARREST AND DNA DAMAGE-INDUCIBLE PROTEIN GADD45 GAMMA"/>
    <property type="match status" value="1"/>
</dbReference>
<dbReference type="Pfam" id="PF01248">
    <property type="entry name" value="Ribosomal_L7Ae"/>
    <property type="match status" value="1"/>
</dbReference>
<dbReference type="SUPFAM" id="SSF55315">
    <property type="entry name" value="L30e-like"/>
    <property type="match status" value="1"/>
</dbReference>
<evidence type="ECO:0000269" key="1">
    <source>
    </source>
</evidence>
<evidence type="ECO:0000269" key="2">
    <source>
    </source>
</evidence>
<evidence type="ECO:0000269" key="3">
    <source>
    </source>
</evidence>
<evidence type="ECO:0000269" key="4">
    <source ref="7"/>
</evidence>
<evidence type="ECO:0000305" key="5"/>
<evidence type="ECO:0007829" key="6">
    <source>
        <dbReference type="PDB" id="3FFM"/>
    </source>
</evidence>
<gene>
    <name type="primary">GADD45G</name>
    <name type="synonym">CR6</name>
    <name type="synonym">DDIT2</name>
</gene>
<protein>
    <recommendedName>
        <fullName>Growth arrest and DNA damage-inducible protein GADD45 gamma</fullName>
    </recommendedName>
    <alternativeName>
        <fullName>Cytokine-responsive protein CR6</fullName>
    </alternativeName>
    <alternativeName>
        <fullName>DNA damage-inducible transcript 2 protein</fullName>
        <shortName>DDIT-2</shortName>
    </alternativeName>
</protein>
<organism>
    <name type="scientific">Homo sapiens</name>
    <name type="common">Human</name>
    <dbReference type="NCBI Taxonomy" id="9606"/>
    <lineage>
        <taxon>Eukaryota</taxon>
        <taxon>Metazoa</taxon>
        <taxon>Chordata</taxon>
        <taxon>Craniata</taxon>
        <taxon>Vertebrata</taxon>
        <taxon>Euteleostomi</taxon>
        <taxon>Mammalia</taxon>
        <taxon>Eutheria</taxon>
        <taxon>Euarchontoglires</taxon>
        <taxon>Primates</taxon>
        <taxon>Haplorrhini</taxon>
        <taxon>Catarrhini</taxon>
        <taxon>Hominidae</taxon>
        <taxon>Homo</taxon>
    </lineage>
</organism>
<accession>O95257</accession>
<accession>Q5VZ87</accession>
<accession>Q9C076</accession>